<sequence>MNGHLPVMLGEVCQLIEPVLGIGDVFIDATLGAGGHSEAILMSSQGALLYGIDRDAYALALARKRLSGFADRCKFVHDTFDKFDKYLSNLHPKVFLFDLGMSSMQIDNPDRGFSYMKSGPLDMRMNESDKITAKEILNGYSETALIRIFRDYGQERYAKRIARQICKARSVSELVTTCQVSQLIRDVCPPHIRKGHPAKRVFQALRIEVNSELLFLRTALEKALDLLQVGGRIVVLSYHSLEDRIVKHLFRSVSVSQLPKGFYINKDPEYKLIGKDLKNPKETEIANNPRASSAHLRAVERVHSHSQAEAQIVEPRA</sequence>
<feature type="chain" id="PRO_0000108738" description="Ribosomal RNA small subunit methyltransferase H">
    <location>
        <begin position="1"/>
        <end position="317"/>
    </location>
</feature>
<feature type="binding site" evidence="1">
    <location>
        <begin position="34"/>
        <end position="36"/>
    </location>
    <ligand>
        <name>S-adenosyl-L-methionine</name>
        <dbReference type="ChEBI" id="CHEBI:59789"/>
    </ligand>
</feature>
<feature type="binding site" evidence="1">
    <location>
        <position position="53"/>
    </location>
    <ligand>
        <name>S-adenosyl-L-methionine</name>
        <dbReference type="ChEBI" id="CHEBI:59789"/>
    </ligand>
</feature>
<feature type="binding site" evidence="1">
    <location>
        <position position="80"/>
    </location>
    <ligand>
        <name>S-adenosyl-L-methionine</name>
        <dbReference type="ChEBI" id="CHEBI:59789"/>
    </ligand>
</feature>
<feature type="binding site" evidence="1">
    <location>
        <position position="98"/>
    </location>
    <ligand>
        <name>S-adenosyl-L-methionine</name>
        <dbReference type="ChEBI" id="CHEBI:59789"/>
    </ligand>
</feature>
<feature type="binding site" evidence="1">
    <location>
        <position position="105"/>
    </location>
    <ligand>
        <name>S-adenosyl-L-methionine</name>
        <dbReference type="ChEBI" id="CHEBI:59789"/>
    </ligand>
</feature>
<comment type="function">
    <text evidence="1">Specifically methylates the N4 position of cytidine in position 1402 (C1402) of 16S rRNA.</text>
</comment>
<comment type="catalytic activity">
    <reaction evidence="1">
        <text>cytidine(1402) in 16S rRNA + S-adenosyl-L-methionine = N(4)-methylcytidine(1402) in 16S rRNA + S-adenosyl-L-homocysteine + H(+)</text>
        <dbReference type="Rhea" id="RHEA:42928"/>
        <dbReference type="Rhea" id="RHEA-COMP:10286"/>
        <dbReference type="Rhea" id="RHEA-COMP:10287"/>
        <dbReference type="ChEBI" id="CHEBI:15378"/>
        <dbReference type="ChEBI" id="CHEBI:57856"/>
        <dbReference type="ChEBI" id="CHEBI:59789"/>
        <dbReference type="ChEBI" id="CHEBI:74506"/>
        <dbReference type="ChEBI" id="CHEBI:82748"/>
        <dbReference type="EC" id="2.1.1.199"/>
    </reaction>
</comment>
<comment type="subcellular location">
    <subcellularLocation>
        <location evidence="1">Cytoplasm</location>
    </subcellularLocation>
</comment>
<comment type="similarity">
    <text evidence="1">Belongs to the methyltransferase superfamily. RsmH family.</text>
</comment>
<gene>
    <name evidence="1" type="primary">rsmH</name>
    <name type="synonym">mraW</name>
    <name type="ordered locus">TW550</name>
</gene>
<proteinExistence type="inferred from homology"/>
<accession>Q83HJ6</accession>
<organism>
    <name type="scientific">Tropheryma whipplei (strain TW08/27)</name>
    <name type="common">Whipple's bacillus</name>
    <dbReference type="NCBI Taxonomy" id="218496"/>
    <lineage>
        <taxon>Bacteria</taxon>
        <taxon>Bacillati</taxon>
        <taxon>Actinomycetota</taxon>
        <taxon>Actinomycetes</taxon>
        <taxon>Micrococcales</taxon>
        <taxon>Tropherymataceae</taxon>
        <taxon>Tropheryma</taxon>
    </lineage>
</organism>
<protein>
    <recommendedName>
        <fullName evidence="1">Ribosomal RNA small subunit methyltransferase H</fullName>
        <ecNumber evidence="1">2.1.1.199</ecNumber>
    </recommendedName>
    <alternativeName>
        <fullName evidence="1">16S rRNA m(4)C1402 methyltransferase</fullName>
    </alternativeName>
    <alternativeName>
        <fullName evidence="1">rRNA (cytosine-N(4)-)-methyltransferase RsmH</fullName>
    </alternativeName>
</protein>
<name>RSMH_TROW8</name>
<reference key="1">
    <citation type="journal article" date="2003" name="Lancet">
        <title>Sequencing and analysis of the genome of the Whipple's disease bacterium Tropheryma whipplei.</title>
        <authorList>
            <person name="Bentley S.D."/>
            <person name="Maiwald M."/>
            <person name="Murphy L.D."/>
            <person name="Pallen M.J."/>
            <person name="Yeats C.A."/>
            <person name="Dover L.G."/>
            <person name="Norbertczak H.T."/>
            <person name="Besra G.S."/>
            <person name="Quail M.A."/>
            <person name="Harris D.E."/>
            <person name="von Herbay A."/>
            <person name="Goble A."/>
            <person name="Rutter S."/>
            <person name="Squares R."/>
            <person name="Squares S."/>
            <person name="Barrell B.G."/>
            <person name="Parkhill J."/>
            <person name="Relman D.A."/>
        </authorList>
    </citation>
    <scope>NUCLEOTIDE SEQUENCE [LARGE SCALE GENOMIC DNA]</scope>
    <source>
        <strain>TW08/27</strain>
    </source>
</reference>
<dbReference type="EC" id="2.1.1.199" evidence="1"/>
<dbReference type="EMBL" id="BX251411">
    <property type="protein sequence ID" value="CAD67216.1"/>
    <property type="molecule type" value="Genomic_DNA"/>
</dbReference>
<dbReference type="RefSeq" id="WP_011096496.1">
    <property type="nucleotide sequence ID" value="NC_004551.1"/>
</dbReference>
<dbReference type="SMR" id="Q83HJ6"/>
<dbReference type="GeneID" id="67388329"/>
<dbReference type="KEGG" id="tws:TW550"/>
<dbReference type="HOGENOM" id="CLU_038422_2_0_11"/>
<dbReference type="GO" id="GO:0005737">
    <property type="term" value="C:cytoplasm"/>
    <property type="evidence" value="ECO:0007669"/>
    <property type="project" value="UniProtKB-SubCell"/>
</dbReference>
<dbReference type="GO" id="GO:0071424">
    <property type="term" value="F:rRNA (cytosine-N4-)-methyltransferase activity"/>
    <property type="evidence" value="ECO:0007669"/>
    <property type="project" value="UniProtKB-UniRule"/>
</dbReference>
<dbReference type="GO" id="GO:0070475">
    <property type="term" value="P:rRNA base methylation"/>
    <property type="evidence" value="ECO:0007669"/>
    <property type="project" value="UniProtKB-UniRule"/>
</dbReference>
<dbReference type="Gene3D" id="1.10.150.170">
    <property type="entry name" value="Putative methyltransferase TM0872, insert domain"/>
    <property type="match status" value="1"/>
</dbReference>
<dbReference type="Gene3D" id="3.40.50.150">
    <property type="entry name" value="Vaccinia Virus protein VP39"/>
    <property type="match status" value="1"/>
</dbReference>
<dbReference type="HAMAP" id="MF_01007">
    <property type="entry name" value="16SrRNA_methyltr_H"/>
    <property type="match status" value="1"/>
</dbReference>
<dbReference type="InterPro" id="IPR002903">
    <property type="entry name" value="RsmH"/>
</dbReference>
<dbReference type="InterPro" id="IPR023397">
    <property type="entry name" value="SAM-dep_MeTrfase_MraW_recog"/>
</dbReference>
<dbReference type="InterPro" id="IPR029063">
    <property type="entry name" value="SAM-dependent_MTases_sf"/>
</dbReference>
<dbReference type="NCBIfam" id="TIGR00006">
    <property type="entry name" value="16S rRNA (cytosine(1402)-N(4))-methyltransferase RsmH"/>
    <property type="match status" value="1"/>
</dbReference>
<dbReference type="PANTHER" id="PTHR11265:SF0">
    <property type="entry name" value="12S RRNA N4-METHYLCYTIDINE METHYLTRANSFERASE"/>
    <property type="match status" value="1"/>
</dbReference>
<dbReference type="PANTHER" id="PTHR11265">
    <property type="entry name" value="S-ADENOSYL-METHYLTRANSFERASE MRAW"/>
    <property type="match status" value="1"/>
</dbReference>
<dbReference type="Pfam" id="PF01795">
    <property type="entry name" value="Methyltransf_5"/>
    <property type="match status" value="1"/>
</dbReference>
<dbReference type="PIRSF" id="PIRSF004486">
    <property type="entry name" value="MraW"/>
    <property type="match status" value="1"/>
</dbReference>
<dbReference type="SUPFAM" id="SSF81799">
    <property type="entry name" value="Putative methyltransferase TM0872, insert domain"/>
    <property type="match status" value="1"/>
</dbReference>
<dbReference type="SUPFAM" id="SSF53335">
    <property type="entry name" value="S-adenosyl-L-methionine-dependent methyltransferases"/>
    <property type="match status" value="1"/>
</dbReference>
<keyword id="KW-0963">Cytoplasm</keyword>
<keyword id="KW-0489">Methyltransferase</keyword>
<keyword id="KW-0698">rRNA processing</keyword>
<keyword id="KW-0949">S-adenosyl-L-methionine</keyword>
<keyword id="KW-0808">Transferase</keyword>
<evidence type="ECO:0000255" key="1">
    <source>
        <dbReference type="HAMAP-Rule" id="MF_01007"/>
    </source>
</evidence>